<feature type="chain" id="PRO_0000131985" description="Cytidylate kinase">
    <location>
        <begin position="1"/>
        <end position="223"/>
    </location>
</feature>
<feature type="binding site" evidence="1">
    <location>
        <begin position="10"/>
        <end position="18"/>
    </location>
    <ligand>
        <name>ATP</name>
        <dbReference type="ChEBI" id="CHEBI:30616"/>
    </ligand>
</feature>
<feature type="strand" evidence="2">
    <location>
        <begin position="5"/>
        <end position="9"/>
    </location>
</feature>
<feature type="helix" evidence="2">
    <location>
        <begin position="16"/>
        <end position="27"/>
    </location>
</feature>
<feature type="strand" evidence="2">
    <location>
        <begin position="30"/>
        <end position="33"/>
    </location>
</feature>
<feature type="helix" evidence="2">
    <location>
        <begin position="34"/>
        <end position="47"/>
    </location>
</feature>
<feature type="helix" evidence="2">
    <location>
        <begin position="55"/>
        <end position="64"/>
    </location>
</feature>
<feature type="strand" evidence="2">
    <location>
        <begin position="68"/>
        <end position="72"/>
    </location>
</feature>
<feature type="turn" evidence="2">
    <location>
        <begin position="73"/>
        <end position="75"/>
    </location>
</feature>
<feature type="strand" evidence="2">
    <location>
        <begin position="76"/>
        <end position="81"/>
    </location>
</feature>
<feature type="strand" evidence="2">
    <location>
        <begin position="84"/>
        <end position="90"/>
    </location>
</feature>
<feature type="helix" evidence="2">
    <location>
        <begin position="93"/>
        <end position="103"/>
    </location>
</feature>
<feature type="helix" evidence="2">
    <location>
        <begin position="106"/>
        <end position="120"/>
    </location>
</feature>
<feature type="strand" evidence="2">
    <location>
        <begin position="125"/>
        <end position="128"/>
    </location>
</feature>
<feature type="strand" evidence="2">
    <location>
        <begin position="133"/>
        <end position="136"/>
    </location>
</feature>
<feature type="helix" evidence="2">
    <location>
        <begin position="137"/>
        <end position="139"/>
    </location>
</feature>
<feature type="strand" evidence="2">
    <location>
        <begin position="141"/>
        <end position="147"/>
    </location>
</feature>
<feature type="helix" evidence="2">
    <location>
        <begin position="150"/>
        <end position="163"/>
    </location>
</feature>
<feature type="helix" evidence="2">
    <location>
        <begin position="170"/>
        <end position="184"/>
    </location>
</feature>
<feature type="strand" evidence="2">
    <location>
        <begin position="188"/>
        <end position="190"/>
    </location>
</feature>
<feature type="strand" evidence="2">
    <location>
        <begin position="199"/>
        <end position="202"/>
    </location>
</feature>
<feature type="helix" evidence="2">
    <location>
        <begin position="208"/>
        <end position="222"/>
    </location>
</feature>
<sequence>MKTIQIAIDGPASSGKSTVAKIIAKDFGFTYLDTGAMYRAATYMALKNQLGVEEVEALLALLDQHPISFGRSETGDQLVFVGDVDITHPIRENEVTNHVSAIAAIPQVREKLVSLQQEIAQQGGIVMDGRDIGTVVLPQAELKIFLVASVDERAERRYKENIAKGIETDLETLKKEIAARDYKDSHRETSPLKQAEDAVYLDTTGLNIQEVVEKIKAEAEKRM</sequence>
<comment type="catalytic activity">
    <reaction evidence="1">
        <text>CMP + ATP = CDP + ADP</text>
        <dbReference type="Rhea" id="RHEA:11600"/>
        <dbReference type="ChEBI" id="CHEBI:30616"/>
        <dbReference type="ChEBI" id="CHEBI:58069"/>
        <dbReference type="ChEBI" id="CHEBI:60377"/>
        <dbReference type="ChEBI" id="CHEBI:456216"/>
        <dbReference type="EC" id="2.7.4.25"/>
    </reaction>
</comment>
<comment type="catalytic activity">
    <reaction evidence="1">
        <text>dCMP + ATP = dCDP + ADP</text>
        <dbReference type="Rhea" id="RHEA:25094"/>
        <dbReference type="ChEBI" id="CHEBI:30616"/>
        <dbReference type="ChEBI" id="CHEBI:57566"/>
        <dbReference type="ChEBI" id="CHEBI:58593"/>
        <dbReference type="ChEBI" id="CHEBI:456216"/>
        <dbReference type="EC" id="2.7.4.25"/>
    </reaction>
</comment>
<comment type="subcellular location">
    <subcellularLocation>
        <location evidence="1">Cytoplasm</location>
    </subcellularLocation>
</comment>
<comment type="similarity">
    <text evidence="1">Belongs to the cytidylate kinase family. Type 1 subfamily.</text>
</comment>
<name>KCY_STRPN</name>
<accession>Q97PK6</accession>
<gene>
    <name evidence="1" type="primary">cmk</name>
    <name type="ordered locus">SP_1603</name>
</gene>
<organism>
    <name type="scientific">Streptococcus pneumoniae serotype 4 (strain ATCC BAA-334 / TIGR4)</name>
    <dbReference type="NCBI Taxonomy" id="170187"/>
    <lineage>
        <taxon>Bacteria</taxon>
        <taxon>Bacillati</taxon>
        <taxon>Bacillota</taxon>
        <taxon>Bacilli</taxon>
        <taxon>Lactobacillales</taxon>
        <taxon>Streptococcaceae</taxon>
        <taxon>Streptococcus</taxon>
    </lineage>
</organism>
<protein>
    <recommendedName>
        <fullName evidence="1">Cytidylate kinase</fullName>
        <shortName evidence="1">CK</shortName>
        <ecNumber evidence="1">2.7.4.25</ecNumber>
    </recommendedName>
    <alternativeName>
        <fullName evidence="1">Cytidine monophosphate kinase</fullName>
        <shortName evidence="1">CMP kinase</shortName>
    </alternativeName>
</protein>
<keyword id="KW-0002">3D-structure</keyword>
<keyword id="KW-0067">ATP-binding</keyword>
<keyword id="KW-0963">Cytoplasm</keyword>
<keyword id="KW-0418">Kinase</keyword>
<keyword id="KW-0547">Nucleotide-binding</keyword>
<keyword id="KW-1185">Reference proteome</keyword>
<keyword id="KW-0808">Transferase</keyword>
<evidence type="ECO:0000255" key="1">
    <source>
        <dbReference type="HAMAP-Rule" id="MF_00238"/>
    </source>
</evidence>
<evidence type="ECO:0007829" key="2">
    <source>
        <dbReference type="PDB" id="1Q3T"/>
    </source>
</evidence>
<dbReference type="EC" id="2.7.4.25" evidence="1"/>
<dbReference type="EMBL" id="AE005672">
    <property type="protein sequence ID" value="AAK75687.1"/>
    <property type="molecule type" value="Genomic_DNA"/>
</dbReference>
<dbReference type="PIR" id="F95186">
    <property type="entry name" value="F95186"/>
</dbReference>
<dbReference type="RefSeq" id="WP_000849381.1">
    <property type="nucleotide sequence ID" value="NZ_CP155539.1"/>
</dbReference>
<dbReference type="PDB" id="1Q3T">
    <property type="method" value="NMR"/>
    <property type="chains" value="A=1-223"/>
</dbReference>
<dbReference type="PDBsum" id="1Q3T"/>
<dbReference type="SMR" id="Q97PK6"/>
<dbReference type="PaxDb" id="170187-SP_1603"/>
<dbReference type="EnsemblBacteria" id="AAK75687">
    <property type="protein sequence ID" value="AAK75687"/>
    <property type="gene ID" value="SP_1603"/>
</dbReference>
<dbReference type="KEGG" id="spn:SP_1603"/>
<dbReference type="eggNOG" id="COG0283">
    <property type="taxonomic scope" value="Bacteria"/>
</dbReference>
<dbReference type="PhylomeDB" id="Q97PK6"/>
<dbReference type="BioCyc" id="SPNE170187:G1FZB-1624-MONOMER"/>
<dbReference type="EvolutionaryTrace" id="Q97PK6"/>
<dbReference type="Proteomes" id="UP000000585">
    <property type="component" value="Chromosome"/>
</dbReference>
<dbReference type="GO" id="GO:0005829">
    <property type="term" value="C:cytosol"/>
    <property type="evidence" value="ECO:0007669"/>
    <property type="project" value="TreeGrafter"/>
</dbReference>
<dbReference type="GO" id="GO:0005524">
    <property type="term" value="F:ATP binding"/>
    <property type="evidence" value="ECO:0007669"/>
    <property type="project" value="UniProtKB-UniRule"/>
</dbReference>
<dbReference type="GO" id="GO:0036430">
    <property type="term" value="F:CMP kinase activity"/>
    <property type="evidence" value="ECO:0007669"/>
    <property type="project" value="RHEA"/>
</dbReference>
<dbReference type="GO" id="GO:0036431">
    <property type="term" value="F:dCMP kinase activity"/>
    <property type="evidence" value="ECO:0007669"/>
    <property type="project" value="RHEA"/>
</dbReference>
<dbReference type="GO" id="GO:0015949">
    <property type="term" value="P:nucleobase-containing small molecule interconversion"/>
    <property type="evidence" value="ECO:0007669"/>
    <property type="project" value="TreeGrafter"/>
</dbReference>
<dbReference type="GO" id="GO:0006220">
    <property type="term" value="P:pyrimidine nucleotide metabolic process"/>
    <property type="evidence" value="ECO:0007669"/>
    <property type="project" value="UniProtKB-UniRule"/>
</dbReference>
<dbReference type="CDD" id="cd02020">
    <property type="entry name" value="CMPK"/>
    <property type="match status" value="1"/>
</dbReference>
<dbReference type="FunFam" id="3.40.50.300:FF:000484">
    <property type="entry name" value="Cytidylate kinase"/>
    <property type="match status" value="1"/>
</dbReference>
<dbReference type="Gene3D" id="3.40.50.300">
    <property type="entry name" value="P-loop containing nucleotide triphosphate hydrolases"/>
    <property type="match status" value="1"/>
</dbReference>
<dbReference type="HAMAP" id="MF_00238">
    <property type="entry name" value="Cytidyl_kinase_type1"/>
    <property type="match status" value="1"/>
</dbReference>
<dbReference type="InterPro" id="IPR003136">
    <property type="entry name" value="Cytidylate_kin"/>
</dbReference>
<dbReference type="InterPro" id="IPR011994">
    <property type="entry name" value="Cytidylate_kinase_dom"/>
</dbReference>
<dbReference type="InterPro" id="IPR027417">
    <property type="entry name" value="P-loop_NTPase"/>
</dbReference>
<dbReference type="NCBIfam" id="TIGR00017">
    <property type="entry name" value="cmk"/>
    <property type="match status" value="1"/>
</dbReference>
<dbReference type="PANTHER" id="PTHR21299:SF2">
    <property type="entry name" value="CYTIDYLATE KINASE"/>
    <property type="match status" value="1"/>
</dbReference>
<dbReference type="PANTHER" id="PTHR21299">
    <property type="entry name" value="CYTIDYLATE KINASE/PANTOATE-BETA-ALANINE LIGASE"/>
    <property type="match status" value="1"/>
</dbReference>
<dbReference type="Pfam" id="PF02224">
    <property type="entry name" value="Cytidylate_kin"/>
    <property type="match status" value="1"/>
</dbReference>
<dbReference type="SUPFAM" id="SSF52540">
    <property type="entry name" value="P-loop containing nucleoside triphosphate hydrolases"/>
    <property type="match status" value="1"/>
</dbReference>
<reference key="1">
    <citation type="journal article" date="2001" name="Science">
        <title>Complete genome sequence of a virulent isolate of Streptococcus pneumoniae.</title>
        <authorList>
            <person name="Tettelin H."/>
            <person name="Nelson K.E."/>
            <person name="Paulsen I.T."/>
            <person name="Eisen J.A."/>
            <person name="Read T.D."/>
            <person name="Peterson S.N."/>
            <person name="Heidelberg J.F."/>
            <person name="DeBoy R.T."/>
            <person name="Haft D.H."/>
            <person name="Dodson R.J."/>
            <person name="Durkin A.S."/>
            <person name="Gwinn M.L."/>
            <person name="Kolonay J.F."/>
            <person name="Nelson W.C."/>
            <person name="Peterson J.D."/>
            <person name="Umayam L.A."/>
            <person name="White O."/>
            <person name="Salzberg S.L."/>
            <person name="Lewis M.R."/>
            <person name="Radune D."/>
            <person name="Holtzapple E.K."/>
            <person name="Khouri H.M."/>
            <person name="Wolf A.M."/>
            <person name="Utterback T.R."/>
            <person name="Hansen C.L."/>
            <person name="McDonald L.A."/>
            <person name="Feldblyum T.V."/>
            <person name="Angiuoli S.V."/>
            <person name="Dickinson T."/>
            <person name="Hickey E.K."/>
            <person name="Holt I.E."/>
            <person name="Loftus B.J."/>
            <person name="Yang F."/>
            <person name="Smith H.O."/>
            <person name="Venter J.C."/>
            <person name="Dougherty B.A."/>
            <person name="Morrison D.A."/>
            <person name="Hollingshead S.K."/>
            <person name="Fraser C.M."/>
        </authorList>
    </citation>
    <scope>NUCLEOTIDE SEQUENCE [LARGE SCALE GENOMIC DNA]</scope>
    <source>
        <strain>ATCC BAA-334 / TIGR4</strain>
    </source>
</reference>
<proteinExistence type="evidence at protein level"/>